<sequence>MPISSKFNQRVRARLEEDEFEQFSGESTSDEGLEGGESVEDEEEEEENSAEDHSEEDDDEGEEDDDDDGDVEDSSSDINPSLNAISFGALAKAQASLGKRKRPTASTGGISPKRAKVPGRHSPTPSASSSGEKQEPEPELSEYQKHLAANAKKPPQKLTHRTSKHAPTIQSSRHAVSRKRTILEPPPVPKARDPRFDSVVLSHSTNGNSSTASNAAIHARKNYAFLDSYRKDEIAQLRKQVSTLQTKKHKTNYDERELARLKRQITSMSDRQRTFERKEMEREVLVQHRRKERELIREGKKSKPYFLKRGEVKKEAVAKRFTEMSGKEKQRALERRRKKVAGKERKEMPWGRRVVE</sequence>
<name>RRP36_BLAGS</name>
<organism>
    <name type="scientific">Blastomyces gilchristii (strain SLH14081)</name>
    <name type="common">Blastomyces dermatitidis</name>
    <dbReference type="NCBI Taxonomy" id="559298"/>
    <lineage>
        <taxon>Eukaryota</taxon>
        <taxon>Fungi</taxon>
        <taxon>Dikarya</taxon>
        <taxon>Ascomycota</taxon>
        <taxon>Pezizomycotina</taxon>
        <taxon>Eurotiomycetes</taxon>
        <taxon>Eurotiomycetidae</taxon>
        <taxon>Onygenales</taxon>
        <taxon>Ajellomycetaceae</taxon>
        <taxon>Blastomyces</taxon>
    </lineage>
</organism>
<gene>
    <name type="primary">RRP36</name>
    <name type="ORF">BDBG_07734</name>
</gene>
<dbReference type="EMBL" id="GG657467">
    <property type="protein sequence ID" value="OAT12389.1"/>
    <property type="molecule type" value="Genomic_DNA"/>
</dbReference>
<dbReference type="RefSeq" id="XP_002621895.1">
    <property type="nucleotide sequence ID" value="XM_002621849.1"/>
</dbReference>
<dbReference type="SMR" id="C5JYW1"/>
<dbReference type="STRING" id="559298.C5JYW1"/>
<dbReference type="GeneID" id="8502162"/>
<dbReference type="KEGG" id="bgh:BDBG_07734"/>
<dbReference type="VEuPathDB" id="FungiDB:BDBG_07734"/>
<dbReference type="HOGENOM" id="CLU_048802_0_0_1"/>
<dbReference type="Proteomes" id="UP000002038">
    <property type="component" value="Unassembled WGS sequence"/>
</dbReference>
<dbReference type="GO" id="GO:0030686">
    <property type="term" value="C:90S preribosome"/>
    <property type="evidence" value="ECO:0007669"/>
    <property type="project" value="TreeGrafter"/>
</dbReference>
<dbReference type="GO" id="GO:0005730">
    <property type="term" value="C:nucleolus"/>
    <property type="evidence" value="ECO:0007669"/>
    <property type="project" value="UniProtKB-SubCell"/>
</dbReference>
<dbReference type="GO" id="GO:0000462">
    <property type="term" value="P:maturation of SSU-rRNA from tricistronic rRNA transcript (SSU-rRNA, 5.8S rRNA, LSU-rRNA)"/>
    <property type="evidence" value="ECO:0007669"/>
    <property type="project" value="TreeGrafter"/>
</dbReference>
<dbReference type="InterPro" id="IPR009292">
    <property type="entry name" value="RRP36"/>
</dbReference>
<dbReference type="PANTHER" id="PTHR21738">
    <property type="entry name" value="RIBOSOMAL RNA PROCESSING PROTEIN 36 HOMOLOG"/>
    <property type="match status" value="1"/>
</dbReference>
<dbReference type="PANTHER" id="PTHR21738:SF0">
    <property type="entry name" value="RIBOSOMAL RNA PROCESSING PROTEIN 36 HOMOLOG"/>
    <property type="match status" value="1"/>
</dbReference>
<dbReference type="Pfam" id="PF06102">
    <property type="entry name" value="RRP36"/>
    <property type="match status" value="1"/>
</dbReference>
<evidence type="ECO:0000250" key="1"/>
<evidence type="ECO:0000255" key="2"/>
<evidence type="ECO:0000256" key="3">
    <source>
        <dbReference type="SAM" id="MobiDB-lite"/>
    </source>
</evidence>
<evidence type="ECO:0000305" key="4"/>
<comment type="function">
    <text evidence="1">Component of the 90S pre-ribosome involved in the maturation of rRNAs. Required for early cleavages of the pre-RNAs in the 40S ribosomal subunit maturation pathway (By similarity).</text>
</comment>
<comment type="subunit">
    <text evidence="1">Associates with 90S and pre-40S pre-ribosomal particles.</text>
</comment>
<comment type="subcellular location">
    <subcellularLocation>
        <location evidence="1">Nucleus</location>
        <location evidence="1">Nucleolus</location>
    </subcellularLocation>
</comment>
<comment type="similarity">
    <text evidence="4">Belongs to the RRP36 family.</text>
</comment>
<proteinExistence type="inferred from homology"/>
<keyword id="KW-0175">Coiled coil</keyword>
<keyword id="KW-0539">Nucleus</keyword>
<keyword id="KW-1185">Reference proteome</keyword>
<keyword id="KW-0687">Ribonucleoprotein</keyword>
<keyword id="KW-0690">Ribosome biogenesis</keyword>
<keyword id="KW-0698">rRNA processing</keyword>
<accession>C5JYW1</accession>
<accession>A0A179UYU2</accession>
<protein>
    <recommendedName>
        <fullName>rRNA biogenesis protein RRP36</fullName>
    </recommendedName>
    <alternativeName>
        <fullName>Ribosomal RNA-processing protein 36</fullName>
    </alternativeName>
</protein>
<reference key="1">
    <citation type="journal article" date="2015" name="PLoS Genet.">
        <title>The dynamic genome and transcriptome of the human fungal pathogen Blastomyces and close relative Emmonsia.</title>
        <authorList>
            <person name="Munoz J.F."/>
            <person name="Gauthier G.M."/>
            <person name="Desjardins C.A."/>
            <person name="Gallo J.E."/>
            <person name="Holder J."/>
            <person name="Sullivan T.D."/>
            <person name="Marty A.J."/>
            <person name="Carmen J.C."/>
            <person name="Chen Z."/>
            <person name="Ding L."/>
            <person name="Gujja S."/>
            <person name="Magrini V."/>
            <person name="Misas E."/>
            <person name="Mitreva M."/>
            <person name="Priest M."/>
            <person name="Saif S."/>
            <person name="Whiston E.A."/>
            <person name="Young S."/>
            <person name="Zeng Q."/>
            <person name="Goldman W.E."/>
            <person name="Mardis E.R."/>
            <person name="Taylor J.W."/>
            <person name="McEwen J.G."/>
            <person name="Clay O.K."/>
            <person name="Klein B.S."/>
            <person name="Cuomo C.A."/>
        </authorList>
    </citation>
    <scope>NUCLEOTIDE SEQUENCE [LARGE SCALE GENOMIC DNA]</scope>
    <source>
        <strain>SLH14081</strain>
    </source>
</reference>
<feature type="chain" id="PRO_0000397611" description="rRNA biogenesis protein RRP36">
    <location>
        <begin position="1"/>
        <end position="356"/>
    </location>
</feature>
<feature type="region of interest" description="Disordered" evidence="3">
    <location>
        <begin position="1"/>
        <end position="217"/>
    </location>
</feature>
<feature type="region of interest" description="Disordered" evidence="3">
    <location>
        <begin position="323"/>
        <end position="356"/>
    </location>
</feature>
<feature type="coiled-coil region" evidence="2">
    <location>
        <begin position="230"/>
        <end position="278"/>
    </location>
</feature>
<feature type="compositionally biased region" description="Acidic residues" evidence="3">
    <location>
        <begin position="28"/>
        <end position="75"/>
    </location>
</feature>
<feature type="compositionally biased region" description="Basic residues" evidence="3">
    <location>
        <begin position="154"/>
        <end position="164"/>
    </location>
</feature>
<feature type="compositionally biased region" description="Low complexity" evidence="3">
    <location>
        <begin position="202"/>
        <end position="216"/>
    </location>
</feature>
<feature type="compositionally biased region" description="Basic and acidic residues" evidence="3">
    <location>
        <begin position="323"/>
        <end position="333"/>
    </location>
</feature>
<feature type="compositionally biased region" description="Basic and acidic residues" evidence="3">
    <location>
        <begin position="341"/>
        <end position="356"/>
    </location>
</feature>